<sequence length="47" mass="5625">MTKGKRTFQPNNRRRARVHGFRLRMRTRAGRSIVSSRRRKGRRTLSA</sequence>
<keyword id="KW-0002">3D-structure</keyword>
<keyword id="KW-1185">Reference proteome</keyword>
<keyword id="KW-0687">Ribonucleoprotein</keyword>
<keyword id="KW-0689">Ribosomal protein</keyword>
<reference key="1">
    <citation type="submission" date="1995-10" db="EMBL/GenBank/DDBJ databases">
        <title>The dnaA gene region of M. tuberculosis.</title>
        <authorList>
            <person name="Qin M.H."/>
            <person name="Madiraju M.V."/>
            <person name="Rajagopalan M."/>
        </authorList>
    </citation>
    <scope>NUCLEOTIDE SEQUENCE [GENOMIC DNA]</scope>
</reference>
<reference key="2">
    <citation type="journal article" date="1996" name="Mol. Microbiol.">
        <title>Organization of the origins of replication of the chromosomes of Mycobacterium smegmatis, Mycobacterium leprae and Mycobacterium tuberculosis and isolation of a functional origin from M. smegmatis.</title>
        <authorList>
            <person name="Salazar L."/>
            <person name="Fsihi H."/>
            <person name="De Rossi E."/>
            <person name="Riccardi G."/>
            <person name="Rios C."/>
            <person name="Cole S.T."/>
            <person name="Takiff H.E."/>
        </authorList>
    </citation>
    <scope>NUCLEOTIDE SEQUENCE [GENOMIC DNA]</scope>
    <source>
        <strain>ATCC 25618 / H37Rv</strain>
    </source>
</reference>
<reference key="3">
    <citation type="journal article" date="1998" name="Nature">
        <title>Deciphering the biology of Mycobacterium tuberculosis from the complete genome sequence.</title>
        <authorList>
            <person name="Cole S.T."/>
            <person name="Brosch R."/>
            <person name="Parkhill J."/>
            <person name="Garnier T."/>
            <person name="Churcher C.M."/>
            <person name="Harris D.E."/>
            <person name="Gordon S.V."/>
            <person name="Eiglmeier K."/>
            <person name="Gas S."/>
            <person name="Barry C.E. III"/>
            <person name="Tekaia F."/>
            <person name="Badcock K."/>
            <person name="Basham D."/>
            <person name="Brown D."/>
            <person name="Chillingworth T."/>
            <person name="Connor R."/>
            <person name="Davies R.M."/>
            <person name="Devlin K."/>
            <person name="Feltwell T."/>
            <person name="Gentles S."/>
            <person name="Hamlin N."/>
            <person name="Holroyd S."/>
            <person name="Hornsby T."/>
            <person name="Jagels K."/>
            <person name="Krogh A."/>
            <person name="McLean J."/>
            <person name="Moule S."/>
            <person name="Murphy L.D."/>
            <person name="Oliver S."/>
            <person name="Osborne J."/>
            <person name="Quail M.A."/>
            <person name="Rajandream M.A."/>
            <person name="Rogers J."/>
            <person name="Rutter S."/>
            <person name="Seeger K."/>
            <person name="Skelton S."/>
            <person name="Squares S."/>
            <person name="Squares R."/>
            <person name="Sulston J.E."/>
            <person name="Taylor K."/>
            <person name="Whitehead S."/>
            <person name="Barrell B.G."/>
        </authorList>
    </citation>
    <scope>NUCLEOTIDE SEQUENCE [LARGE SCALE GENOMIC DNA]</scope>
    <source>
        <strain>ATCC 25618 / H37Rv</strain>
    </source>
</reference>
<organism>
    <name type="scientific">Mycobacterium tuberculosis (strain ATCC 25618 / H37Rv)</name>
    <dbReference type="NCBI Taxonomy" id="83332"/>
    <lineage>
        <taxon>Bacteria</taxon>
        <taxon>Bacillati</taxon>
        <taxon>Actinomycetota</taxon>
        <taxon>Actinomycetes</taxon>
        <taxon>Mycobacteriales</taxon>
        <taxon>Mycobacteriaceae</taxon>
        <taxon>Mycobacterium</taxon>
        <taxon>Mycobacterium tuberculosis complex</taxon>
    </lineage>
</organism>
<accession>P9WH93</accession>
<accession>L0TDY5</accession>
<accession>P0A5W4</accession>
<accession>P52829</accession>
<proteinExistence type="evidence at protein level"/>
<comment type="similarity">
    <text evidence="1">Belongs to the bacterial ribosomal protein bL34 family.</text>
</comment>
<feature type="chain" id="PRO_0000187424" description="Large ribosomal subunit protein bL34">
    <location>
        <begin position="1"/>
        <end position="47"/>
    </location>
</feature>
<name>RL34_MYCTU</name>
<gene>
    <name type="primary">rpmH</name>
    <name type="ordered locus">Rv3924c</name>
    <name type="ORF">MTV028.15</name>
</gene>
<protein>
    <recommendedName>
        <fullName evidence="1">Large ribosomal subunit protein bL34</fullName>
    </recommendedName>
    <alternativeName>
        <fullName>50S ribosomal protein L34</fullName>
    </alternativeName>
</protein>
<evidence type="ECO:0000305" key="1"/>
<dbReference type="EMBL" id="U38891">
    <property type="protein sequence ID" value="AAG00842.1"/>
    <property type="molecule type" value="Genomic_DNA"/>
</dbReference>
<dbReference type="EMBL" id="X92504">
    <property type="protein sequence ID" value="CAA63256.1"/>
    <property type="molecule type" value="Genomic_DNA"/>
</dbReference>
<dbReference type="EMBL" id="AL123456">
    <property type="protein sequence ID" value="CCP46753.1"/>
    <property type="molecule type" value="Genomic_DNA"/>
</dbReference>
<dbReference type="PIR" id="S70981">
    <property type="entry name" value="S70981"/>
</dbReference>
<dbReference type="RefSeq" id="NP_218441.1">
    <property type="nucleotide sequence ID" value="NC_000962.3"/>
</dbReference>
<dbReference type="RefSeq" id="WP_003400206.1">
    <property type="nucleotide sequence ID" value="NZ_NVQJ01000005.1"/>
</dbReference>
<dbReference type="PDB" id="5V7Q">
    <property type="method" value="EM"/>
    <property type="resolution" value="3.70 A"/>
    <property type="chains" value="2=1-47"/>
</dbReference>
<dbReference type="PDB" id="5V93">
    <property type="method" value="EM"/>
    <property type="resolution" value="4.00 A"/>
    <property type="chains" value="2=1-47"/>
</dbReference>
<dbReference type="PDB" id="7KGB">
    <property type="method" value="EM"/>
    <property type="resolution" value="2.70 A"/>
    <property type="chains" value="2=1-47"/>
</dbReference>
<dbReference type="PDB" id="7MSC">
    <property type="method" value="EM"/>
    <property type="resolution" value="2.97 A"/>
    <property type="chains" value="2=1-47"/>
</dbReference>
<dbReference type="PDB" id="7MSH">
    <property type="method" value="EM"/>
    <property type="resolution" value="3.23 A"/>
    <property type="chains" value="2=1-47"/>
</dbReference>
<dbReference type="PDB" id="7MSM">
    <property type="method" value="EM"/>
    <property type="resolution" value="2.79 A"/>
    <property type="chains" value="2=1-47"/>
</dbReference>
<dbReference type="PDB" id="7MSZ">
    <property type="method" value="EM"/>
    <property type="resolution" value="3.10 A"/>
    <property type="chains" value="2=1-47"/>
</dbReference>
<dbReference type="PDB" id="7MT2">
    <property type="method" value="EM"/>
    <property type="resolution" value="2.76 A"/>
    <property type="chains" value="2=1-47"/>
</dbReference>
<dbReference type="PDB" id="7MT3">
    <property type="method" value="EM"/>
    <property type="resolution" value="2.80 A"/>
    <property type="chains" value="2=1-47"/>
</dbReference>
<dbReference type="PDB" id="7MT7">
    <property type="method" value="EM"/>
    <property type="resolution" value="2.71 A"/>
    <property type="chains" value="2=1-47"/>
</dbReference>
<dbReference type="PDB" id="7SFR">
    <property type="method" value="EM"/>
    <property type="resolution" value="2.60 A"/>
    <property type="chains" value="2=1-47"/>
</dbReference>
<dbReference type="PDBsum" id="5V7Q"/>
<dbReference type="PDBsum" id="5V93"/>
<dbReference type="PDBsum" id="7KGB"/>
<dbReference type="PDBsum" id="7MSC"/>
<dbReference type="PDBsum" id="7MSH"/>
<dbReference type="PDBsum" id="7MSM"/>
<dbReference type="PDBsum" id="7MSZ"/>
<dbReference type="PDBsum" id="7MT2"/>
<dbReference type="PDBsum" id="7MT3"/>
<dbReference type="PDBsum" id="7MT7"/>
<dbReference type="PDBsum" id="7SFR"/>
<dbReference type="EMDB" id="EMD-22865"/>
<dbReference type="EMDB" id="EMD-23961"/>
<dbReference type="EMDB" id="EMD-23962"/>
<dbReference type="EMDB" id="EMD-23969"/>
<dbReference type="EMDB" id="EMD-23972"/>
<dbReference type="EMDB" id="EMD-23974"/>
<dbReference type="EMDB" id="EMD-23975"/>
<dbReference type="EMDB" id="EMD-23976"/>
<dbReference type="EMDB" id="EMD-8645"/>
<dbReference type="SMR" id="P9WH93"/>
<dbReference type="FunCoup" id="P9WH93">
    <property type="interactions" value="93"/>
</dbReference>
<dbReference type="STRING" id="83332.Rv3924c"/>
<dbReference type="PaxDb" id="83332-Rv3924c"/>
<dbReference type="DNASU" id="886258"/>
<dbReference type="GeneID" id="45427924"/>
<dbReference type="GeneID" id="886258"/>
<dbReference type="KEGG" id="mtu:Rv3924c"/>
<dbReference type="KEGG" id="mtv:RVBD_3924c"/>
<dbReference type="TubercuList" id="Rv3924c"/>
<dbReference type="eggNOG" id="COG0230">
    <property type="taxonomic scope" value="Bacteria"/>
</dbReference>
<dbReference type="InParanoid" id="P9WH93"/>
<dbReference type="OrthoDB" id="9804832at2"/>
<dbReference type="PhylomeDB" id="P9WH93"/>
<dbReference type="PRO" id="PR:P9WH93"/>
<dbReference type="Proteomes" id="UP000001584">
    <property type="component" value="Chromosome"/>
</dbReference>
<dbReference type="GO" id="GO:1990904">
    <property type="term" value="C:ribonucleoprotein complex"/>
    <property type="evidence" value="ECO:0007669"/>
    <property type="project" value="UniProtKB-KW"/>
</dbReference>
<dbReference type="GO" id="GO:0005840">
    <property type="term" value="C:ribosome"/>
    <property type="evidence" value="ECO:0007669"/>
    <property type="project" value="UniProtKB-KW"/>
</dbReference>
<dbReference type="GO" id="GO:0003735">
    <property type="term" value="F:structural constituent of ribosome"/>
    <property type="evidence" value="ECO:0007669"/>
    <property type="project" value="InterPro"/>
</dbReference>
<dbReference type="GO" id="GO:0006412">
    <property type="term" value="P:translation"/>
    <property type="evidence" value="ECO:0007669"/>
    <property type="project" value="UniProtKB-UniRule"/>
</dbReference>
<dbReference type="FunFam" id="1.10.287.3980:FF:000001">
    <property type="entry name" value="Mitochondrial ribosomal protein L34"/>
    <property type="match status" value="1"/>
</dbReference>
<dbReference type="Gene3D" id="1.10.287.3980">
    <property type="match status" value="1"/>
</dbReference>
<dbReference type="HAMAP" id="MF_00391">
    <property type="entry name" value="Ribosomal_bL34"/>
    <property type="match status" value="1"/>
</dbReference>
<dbReference type="InterPro" id="IPR000271">
    <property type="entry name" value="Ribosomal_bL34"/>
</dbReference>
<dbReference type="InterPro" id="IPR020939">
    <property type="entry name" value="Ribosomal_bL34_CS"/>
</dbReference>
<dbReference type="NCBIfam" id="TIGR01030">
    <property type="entry name" value="rpmH_bact"/>
    <property type="match status" value="1"/>
</dbReference>
<dbReference type="PANTHER" id="PTHR14503:SF4">
    <property type="entry name" value="LARGE RIBOSOMAL SUBUNIT PROTEIN BL34M"/>
    <property type="match status" value="1"/>
</dbReference>
<dbReference type="PANTHER" id="PTHR14503">
    <property type="entry name" value="MITOCHONDRIAL RIBOSOMAL PROTEIN 34 FAMILY MEMBER"/>
    <property type="match status" value="1"/>
</dbReference>
<dbReference type="Pfam" id="PF00468">
    <property type="entry name" value="Ribosomal_L34"/>
    <property type="match status" value="1"/>
</dbReference>
<dbReference type="PROSITE" id="PS00784">
    <property type="entry name" value="RIBOSOMAL_L34"/>
    <property type="match status" value="1"/>
</dbReference>